<keyword id="KW-0997">Cell inner membrane</keyword>
<keyword id="KW-1003">Cell membrane</keyword>
<keyword id="KW-0472">Membrane</keyword>
<keyword id="KW-0520">NAD</keyword>
<keyword id="KW-0874">Quinone</keyword>
<keyword id="KW-1278">Translocase</keyword>
<keyword id="KW-0813">Transport</keyword>
<keyword id="KW-0830">Ubiquinone</keyword>
<protein>
    <recommendedName>
        <fullName evidence="1">NADH-quinone oxidoreductase subunit C</fullName>
        <ecNumber evidence="1">7.1.1.-</ecNumber>
    </recommendedName>
    <alternativeName>
        <fullName evidence="1">NADH dehydrogenase I subunit C</fullName>
    </alternativeName>
    <alternativeName>
        <fullName evidence="1">NDH-1 subunit C</fullName>
    </alternativeName>
</protein>
<organism>
    <name type="scientific">Janthinobacterium sp. (strain Marseille)</name>
    <name type="common">Minibacterium massiliensis</name>
    <dbReference type="NCBI Taxonomy" id="375286"/>
    <lineage>
        <taxon>Bacteria</taxon>
        <taxon>Pseudomonadati</taxon>
        <taxon>Pseudomonadota</taxon>
        <taxon>Betaproteobacteria</taxon>
        <taxon>Burkholderiales</taxon>
        <taxon>Oxalobacteraceae</taxon>
        <taxon>Janthinobacterium</taxon>
    </lineage>
</organism>
<gene>
    <name evidence="1" type="primary">nuoC</name>
    <name type="ordered locus">mma_1464</name>
</gene>
<proteinExistence type="inferred from homology"/>
<name>NUOC_JANMA</name>
<reference key="1">
    <citation type="journal article" date="2007" name="PLoS Genet.">
        <title>Genome analysis of Minibacterium massiliensis highlights the convergent evolution of water-living bacteria.</title>
        <authorList>
            <person name="Audic S."/>
            <person name="Robert C."/>
            <person name="Campagna B."/>
            <person name="Parinello H."/>
            <person name="Claverie J.-M."/>
            <person name="Raoult D."/>
            <person name="Drancourt M."/>
        </authorList>
    </citation>
    <scope>NUCLEOTIDE SEQUENCE [LARGE SCALE GENOMIC DNA]</scope>
    <source>
        <strain>Marseille</strain>
    </source>
</reference>
<evidence type="ECO:0000255" key="1">
    <source>
        <dbReference type="HAMAP-Rule" id="MF_01357"/>
    </source>
</evidence>
<feature type="chain" id="PRO_0000358114" description="NADH-quinone oxidoreductase subunit C">
    <location>
        <begin position="1"/>
        <end position="198"/>
    </location>
</feature>
<sequence length="198" mass="22956">MTIKLELLEAALRNALGDQLQSLTQALGEVTIVVKSHDYASAMRVLRDHADLRFEEMIDLCGVDYSTYGDGLWEGPRFAVVSHLLSIKHNWRVRVRVFAADDEMPVVASMIDIWATANWYEREAFDFFGILFEGHNDLRRILTDYGFIGHPFRKDFPVSGYVEMRYDPEQKRVIYQPVTIDPRENVPRVIREEQYGAK</sequence>
<comment type="function">
    <text evidence="1">NDH-1 shuttles electrons from NADH, via FMN and iron-sulfur (Fe-S) centers, to quinones in the respiratory chain. The immediate electron acceptor for the enzyme in this species is believed to be ubiquinone. Couples the redox reaction to proton translocation (for every two electrons transferred, four hydrogen ions are translocated across the cytoplasmic membrane), and thus conserves the redox energy in a proton gradient.</text>
</comment>
<comment type="catalytic activity">
    <reaction evidence="1">
        <text>a quinone + NADH + 5 H(+)(in) = a quinol + NAD(+) + 4 H(+)(out)</text>
        <dbReference type="Rhea" id="RHEA:57888"/>
        <dbReference type="ChEBI" id="CHEBI:15378"/>
        <dbReference type="ChEBI" id="CHEBI:24646"/>
        <dbReference type="ChEBI" id="CHEBI:57540"/>
        <dbReference type="ChEBI" id="CHEBI:57945"/>
        <dbReference type="ChEBI" id="CHEBI:132124"/>
    </reaction>
</comment>
<comment type="subunit">
    <text evidence="1">NDH-1 is composed of 14 different subunits. Subunits NuoB, C, D, E, F, and G constitute the peripheral sector of the complex.</text>
</comment>
<comment type="subcellular location">
    <subcellularLocation>
        <location evidence="1">Cell inner membrane</location>
        <topology evidence="1">Peripheral membrane protein</topology>
        <orientation evidence="1">Cytoplasmic side</orientation>
    </subcellularLocation>
</comment>
<comment type="similarity">
    <text evidence="1">Belongs to the complex I 30 kDa subunit family.</text>
</comment>
<accession>A6SY07</accession>
<dbReference type="EC" id="7.1.1.-" evidence="1"/>
<dbReference type="EMBL" id="CP000269">
    <property type="protein sequence ID" value="ABR89190.1"/>
    <property type="molecule type" value="Genomic_DNA"/>
</dbReference>
<dbReference type="RefSeq" id="WP_012079320.1">
    <property type="nucleotide sequence ID" value="NC_009659.1"/>
</dbReference>
<dbReference type="SMR" id="A6SY07"/>
<dbReference type="STRING" id="375286.mma_1464"/>
<dbReference type="KEGG" id="mms:mma_1464"/>
<dbReference type="eggNOG" id="COG0852">
    <property type="taxonomic scope" value="Bacteria"/>
</dbReference>
<dbReference type="HOGENOM" id="CLU_042628_2_1_4"/>
<dbReference type="OrthoDB" id="9803286at2"/>
<dbReference type="Proteomes" id="UP000006388">
    <property type="component" value="Chromosome"/>
</dbReference>
<dbReference type="GO" id="GO:0005886">
    <property type="term" value="C:plasma membrane"/>
    <property type="evidence" value="ECO:0007669"/>
    <property type="project" value="UniProtKB-SubCell"/>
</dbReference>
<dbReference type="GO" id="GO:0008137">
    <property type="term" value="F:NADH dehydrogenase (ubiquinone) activity"/>
    <property type="evidence" value="ECO:0007669"/>
    <property type="project" value="InterPro"/>
</dbReference>
<dbReference type="GO" id="GO:0050136">
    <property type="term" value="F:NADH:ubiquinone reductase (non-electrogenic) activity"/>
    <property type="evidence" value="ECO:0007669"/>
    <property type="project" value="UniProtKB-UniRule"/>
</dbReference>
<dbReference type="GO" id="GO:0048038">
    <property type="term" value="F:quinone binding"/>
    <property type="evidence" value="ECO:0007669"/>
    <property type="project" value="UniProtKB-KW"/>
</dbReference>
<dbReference type="Gene3D" id="3.30.460.80">
    <property type="entry name" value="NADH:ubiquinone oxidoreductase, 30kDa subunit"/>
    <property type="match status" value="1"/>
</dbReference>
<dbReference type="HAMAP" id="MF_01357">
    <property type="entry name" value="NDH1_NuoC"/>
    <property type="match status" value="1"/>
</dbReference>
<dbReference type="InterPro" id="IPR010218">
    <property type="entry name" value="NADH_DH_suC"/>
</dbReference>
<dbReference type="InterPro" id="IPR037232">
    <property type="entry name" value="NADH_quin_OxRdtase_su_C/D-like"/>
</dbReference>
<dbReference type="InterPro" id="IPR001268">
    <property type="entry name" value="NADH_UbQ_OxRdtase_30kDa_su"/>
</dbReference>
<dbReference type="InterPro" id="IPR020396">
    <property type="entry name" value="NADH_UbQ_OxRdtase_CS"/>
</dbReference>
<dbReference type="NCBIfam" id="TIGR01961">
    <property type="entry name" value="NuoC_fam"/>
    <property type="match status" value="1"/>
</dbReference>
<dbReference type="NCBIfam" id="NF004730">
    <property type="entry name" value="PRK06074.1-1"/>
    <property type="match status" value="1"/>
</dbReference>
<dbReference type="PANTHER" id="PTHR10884:SF14">
    <property type="entry name" value="NADH DEHYDROGENASE [UBIQUINONE] IRON-SULFUR PROTEIN 3, MITOCHONDRIAL"/>
    <property type="match status" value="1"/>
</dbReference>
<dbReference type="PANTHER" id="PTHR10884">
    <property type="entry name" value="NADH DEHYDROGENASE UBIQUINONE IRON-SULFUR PROTEIN 3"/>
    <property type="match status" value="1"/>
</dbReference>
<dbReference type="Pfam" id="PF00329">
    <property type="entry name" value="Complex1_30kDa"/>
    <property type="match status" value="1"/>
</dbReference>
<dbReference type="SUPFAM" id="SSF143243">
    <property type="entry name" value="Nqo5-like"/>
    <property type="match status" value="1"/>
</dbReference>
<dbReference type="PROSITE" id="PS00542">
    <property type="entry name" value="COMPLEX1_30K"/>
    <property type="match status" value="1"/>
</dbReference>